<evidence type="ECO:0000255" key="1"/>
<evidence type="ECO:0000256" key="2">
    <source>
        <dbReference type="SAM" id="MobiDB-lite"/>
    </source>
</evidence>
<evidence type="ECO:0000269" key="3">
    <source>
    </source>
</evidence>
<evidence type="ECO:0000303" key="4">
    <source>
    </source>
</evidence>
<evidence type="ECO:0000305" key="5"/>
<evidence type="ECO:0000312" key="6">
    <source>
        <dbReference type="EMBL" id="BAC53870.1"/>
    </source>
</evidence>
<feature type="signal peptide" evidence="1 4">
    <location>
        <begin position="1"/>
        <end position="22"/>
    </location>
</feature>
<feature type="propeptide" id="PRO_0000033516" evidence="3">
    <location>
        <begin position="23"/>
        <end position="37"/>
    </location>
</feature>
<feature type="peptide" id="PRO_0000033517" description="Tachykinin-1">
    <location>
        <begin position="38"/>
        <end position="49"/>
    </location>
</feature>
<feature type="propeptide" id="PRO_0000033518" evidence="3">
    <location>
        <begin position="52"/>
        <end position="87"/>
    </location>
</feature>
<feature type="region of interest" description="Disordered" evidence="2">
    <location>
        <begin position="61"/>
        <end position="87"/>
    </location>
</feature>
<feature type="compositionally biased region" description="Basic residues" evidence="2">
    <location>
        <begin position="73"/>
        <end position="87"/>
    </location>
</feature>
<feature type="modified residue" description="Methionine amide" evidence="3">
    <location>
        <position position="49"/>
    </location>
</feature>
<name>TKN1_OCTVU</name>
<protein>
    <recommendedName>
        <fullName>Tachykinin-1</fullName>
    </recommendedName>
    <alternativeName>
        <fullName>OctTK-I</fullName>
    </alternativeName>
    <alternativeName>
        <fullName>Tachykinin I</fullName>
    </alternativeName>
</protein>
<sequence length="87" mass="9699">MIRVGLILCCIFIAGVFEASSADDMLTAHNLIKRSEVKPPSSSEFIGLMGRSEELTRRLIQHPGSMSETSKRGPPKKVSRRPYILKK</sequence>
<accession>Q8I6S3</accession>
<keyword id="KW-0027">Amidation</keyword>
<keyword id="KW-0903">Direct protein sequencing</keyword>
<keyword id="KW-0527">Neuropeptide</keyword>
<keyword id="KW-1185">Reference proteome</keyword>
<keyword id="KW-0964">Secreted</keyword>
<keyword id="KW-0732">Signal</keyword>
<proteinExistence type="evidence at protein level"/>
<organism>
    <name type="scientific">Octopus vulgaris</name>
    <name type="common">Common octopus</name>
    <dbReference type="NCBI Taxonomy" id="6645"/>
    <lineage>
        <taxon>Eukaryota</taxon>
        <taxon>Metazoa</taxon>
        <taxon>Spiralia</taxon>
        <taxon>Lophotrochozoa</taxon>
        <taxon>Mollusca</taxon>
        <taxon>Cephalopoda</taxon>
        <taxon>Coleoidea</taxon>
        <taxon>Octopodiformes</taxon>
        <taxon>Octopoda</taxon>
        <taxon>Incirrata</taxon>
        <taxon>Octopodidae</taxon>
        <taxon>Octopus</taxon>
    </lineage>
</organism>
<comment type="function">
    <text evidence="3">Tachykinins are active peptides which excite neurons, evoke behavioral responses, are potent vasodilators and secretagogues, and contract (directly or indirectly) many smooth muscles.</text>
</comment>
<comment type="subcellular location">
    <subcellularLocation>
        <location evidence="5">Secreted</location>
    </subcellularLocation>
</comment>
<comment type="tissue specificity">
    <text evidence="3">Expressed in the posterior salivary gland and more specifically in the mucus-secreting gland cells.</text>
</comment>
<comment type="similarity">
    <text evidence="3">Belongs to the tachykinin family.</text>
</comment>
<dbReference type="EMBL" id="AB085916">
    <property type="protein sequence ID" value="BAC53870.1"/>
    <property type="molecule type" value="mRNA"/>
</dbReference>
<dbReference type="Proteomes" id="UP000515154">
    <property type="component" value="Unplaced"/>
</dbReference>
<dbReference type="GO" id="GO:0005576">
    <property type="term" value="C:extracellular region"/>
    <property type="evidence" value="ECO:0007669"/>
    <property type="project" value="UniProtKB-SubCell"/>
</dbReference>
<dbReference type="GO" id="GO:0007218">
    <property type="term" value="P:neuropeptide signaling pathway"/>
    <property type="evidence" value="ECO:0007669"/>
    <property type="project" value="UniProtKB-KW"/>
</dbReference>
<dbReference type="InterPro" id="IPR013055">
    <property type="entry name" value="Tachy_Neuro_lke_CS"/>
</dbReference>
<dbReference type="PROSITE" id="PS00267">
    <property type="entry name" value="TACHYKININ"/>
    <property type="match status" value="1"/>
</dbReference>
<reference evidence="5 6" key="1">
    <citation type="journal article" date="2003" name="Peptides">
        <title>Isolation and characterization of novel tachykinins from the posterior salivary gland of the common octopus Octopus vulgaris.</title>
        <authorList>
            <person name="Kanda A."/>
            <person name="Iwakoshi-Ukena E."/>
            <person name="Takuwa-Kuroda K."/>
            <person name="Minakata H."/>
        </authorList>
    </citation>
    <scope>NUCLEOTIDE SEQUENCE [MRNA]</scope>
    <scope>PROTEIN SEQUENCE OF 38-49</scope>
    <scope>FUNCTION</scope>
    <scope>TISSUE SPECIFICITY</scope>
    <scope>AMIDATION AT MET-49</scope>
    <source>
        <tissue>Posterior salivary gland</tissue>
    </source>
</reference>